<protein>
    <recommendedName>
        <fullName evidence="1">tRNA (guanine-N(1)-)-methyltransferase</fullName>
        <ecNumber evidence="1">2.1.1.228</ecNumber>
    </recommendedName>
    <alternativeName>
        <fullName evidence="1">M1G-methyltransferase</fullName>
    </alternativeName>
    <alternativeName>
        <fullName evidence="1">tRNA [GM37] methyltransferase</fullName>
    </alternativeName>
</protein>
<organism>
    <name type="scientific">Rickettsia rickettsii (strain Sheila Smith)</name>
    <dbReference type="NCBI Taxonomy" id="392021"/>
    <lineage>
        <taxon>Bacteria</taxon>
        <taxon>Pseudomonadati</taxon>
        <taxon>Pseudomonadota</taxon>
        <taxon>Alphaproteobacteria</taxon>
        <taxon>Rickettsiales</taxon>
        <taxon>Rickettsiaceae</taxon>
        <taxon>Rickettsieae</taxon>
        <taxon>Rickettsia</taxon>
        <taxon>spotted fever group</taxon>
    </lineage>
</organism>
<sequence length="234" mass="26353">MSILHATILTVFPEMFPGTLGHSLAGQALNKNIWSYDVINIRDFGLTKHKNIDDEAYGGGNGLIMRPDVLGSSIDHALALNPNAEMYYPSPRGRVFTQSFAKEMLKNKNLIFLCGRYEGIDERVIEEYNVKEISVGDYILSGGEIPTLTILDCLIRLLPGVLMNQNTLSSESFEEDGEFKGGLECSLYTRPEIWRNRAVPSVLLSGNHRLINEWKKAQSHMITKLRRPELLKDL</sequence>
<accession>A8GQT2</accession>
<comment type="function">
    <text evidence="1">Specifically methylates guanosine-37 in various tRNAs.</text>
</comment>
<comment type="catalytic activity">
    <reaction evidence="1">
        <text>guanosine(37) in tRNA + S-adenosyl-L-methionine = N(1)-methylguanosine(37) in tRNA + S-adenosyl-L-homocysteine + H(+)</text>
        <dbReference type="Rhea" id="RHEA:36899"/>
        <dbReference type="Rhea" id="RHEA-COMP:10145"/>
        <dbReference type="Rhea" id="RHEA-COMP:10147"/>
        <dbReference type="ChEBI" id="CHEBI:15378"/>
        <dbReference type="ChEBI" id="CHEBI:57856"/>
        <dbReference type="ChEBI" id="CHEBI:59789"/>
        <dbReference type="ChEBI" id="CHEBI:73542"/>
        <dbReference type="ChEBI" id="CHEBI:74269"/>
        <dbReference type="EC" id="2.1.1.228"/>
    </reaction>
</comment>
<comment type="subunit">
    <text evidence="1">Homodimer.</text>
</comment>
<comment type="subcellular location">
    <subcellularLocation>
        <location evidence="1">Cytoplasm</location>
    </subcellularLocation>
</comment>
<comment type="similarity">
    <text evidence="1">Belongs to the RNA methyltransferase TrmD family.</text>
</comment>
<gene>
    <name evidence="1" type="primary">trmD</name>
    <name type="ordered locus">A1G_00875</name>
</gene>
<name>TRMD_RICRS</name>
<reference key="1">
    <citation type="submission" date="2007-09" db="EMBL/GenBank/DDBJ databases">
        <title>Complete genome sequence of Rickettsia rickettsii.</title>
        <authorList>
            <person name="Madan A."/>
            <person name="Fahey J."/>
            <person name="Helton E."/>
            <person name="Ketteman M."/>
            <person name="Madan A."/>
            <person name="Rodrigues S."/>
            <person name="Sanchez A."/>
            <person name="Dasch G."/>
            <person name="Eremeeva M."/>
        </authorList>
    </citation>
    <scope>NUCLEOTIDE SEQUENCE [LARGE SCALE GENOMIC DNA]</scope>
    <source>
        <strain>Sheila Smith</strain>
    </source>
</reference>
<dbReference type="EC" id="2.1.1.228" evidence="1"/>
<dbReference type="EMBL" id="CP000848">
    <property type="protein sequence ID" value="ABV75757.1"/>
    <property type="molecule type" value="Genomic_DNA"/>
</dbReference>
<dbReference type="RefSeq" id="WP_012150369.1">
    <property type="nucleotide sequence ID" value="NZ_CP121767.1"/>
</dbReference>
<dbReference type="SMR" id="A8GQT2"/>
<dbReference type="GeneID" id="79936944"/>
<dbReference type="KEGG" id="rri:A1G_00875"/>
<dbReference type="HOGENOM" id="CLU_047363_0_1_5"/>
<dbReference type="Proteomes" id="UP000006832">
    <property type="component" value="Chromosome"/>
</dbReference>
<dbReference type="GO" id="GO:0005829">
    <property type="term" value="C:cytosol"/>
    <property type="evidence" value="ECO:0007669"/>
    <property type="project" value="TreeGrafter"/>
</dbReference>
<dbReference type="GO" id="GO:0052906">
    <property type="term" value="F:tRNA (guanine(37)-N1)-methyltransferase activity"/>
    <property type="evidence" value="ECO:0007669"/>
    <property type="project" value="UniProtKB-UniRule"/>
</dbReference>
<dbReference type="GO" id="GO:0002939">
    <property type="term" value="P:tRNA N1-guanine methylation"/>
    <property type="evidence" value="ECO:0007669"/>
    <property type="project" value="TreeGrafter"/>
</dbReference>
<dbReference type="CDD" id="cd18080">
    <property type="entry name" value="TrmD-like"/>
    <property type="match status" value="1"/>
</dbReference>
<dbReference type="Gene3D" id="3.40.1280.10">
    <property type="match status" value="1"/>
</dbReference>
<dbReference type="Gene3D" id="1.10.1270.20">
    <property type="entry name" value="tRNA(m1g37)methyltransferase, domain 2"/>
    <property type="match status" value="1"/>
</dbReference>
<dbReference type="HAMAP" id="MF_00605">
    <property type="entry name" value="TrmD"/>
    <property type="match status" value="1"/>
</dbReference>
<dbReference type="InterPro" id="IPR029028">
    <property type="entry name" value="Alpha/beta_knot_MTases"/>
</dbReference>
<dbReference type="InterPro" id="IPR023148">
    <property type="entry name" value="tRNA_m1G_MeTrfase_C_sf"/>
</dbReference>
<dbReference type="InterPro" id="IPR002649">
    <property type="entry name" value="tRNA_m1G_MeTrfase_TrmD"/>
</dbReference>
<dbReference type="InterPro" id="IPR029026">
    <property type="entry name" value="tRNA_m1G_MTases_N"/>
</dbReference>
<dbReference type="InterPro" id="IPR016009">
    <property type="entry name" value="tRNA_MeTrfase_TRMD/TRM10"/>
</dbReference>
<dbReference type="NCBIfam" id="NF000648">
    <property type="entry name" value="PRK00026.1"/>
    <property type="match status" value="1"/>
</dbReference>
<dbReference type="NCBIfam" id="TIGR00088">
    <property type="entry name" value="trmD"/>
    <property type="match status" value="1"/>
</dbReference>
<dbReference type="PANTHER" id="PTHR46417">
    <property type="entry name" value="TRNA (GUANINE-N(1)-)-METHYLTRANSFERASE"/>
    <property type="match status" value="1"/>
</dbReference>
<dbReference type="PANTHER" id="PTHR46417:SF1">
    <property type="entry name" value="TRNA (GUANINE-N(1)-)-METHYLTRANSFERASE"/>
    <property type="match status" value="1"/>
</dbReference>
<dbReference type="Pfam" id="PF01746">
    <property type="entry name" value="tRNA_m1G_MT"/>
    <property type="match status" value="1"/>
</dbReference>
<dbReference type="PIRSF" id="PIRSF000386">
    <property type="entry name" value="tRNA_mtase"/>
    <property type="match status" value="1"/>
</dbReference>
<dbReference type="SUPFAM" id="SSF75217">
    <property type="entry name" value="alpha/beta knot"/>
    <property type="match status" value="1"/>
</dbReference>
<feature type="chain" id="PRO_1000006510" description="tRNA (guanine-N(1)-)-methyltransferase">
    <location>
        <begin position="1"/>
        <end position="234"/>
    </location>
</feature>
<feature type="binding site" evidence="1">
    <location>
        <position position="115"/>
    </location>
    <ligand>
        <name>S-adenosyl-L-methionine</name>
        <dbReference type="ChEBI" id="CHEBI:59789"/>
    </ligand>
</feature>
<feature type="binding site" evidence="1">
    <location>
        <begin position="135"/>
        <end position="140"/>
    </location>
    <ligand>
        <name>S-adenosyl-L-methionine</name>
        <dbReference type="ChEBI" id="CHEBI:59789"/>
    </ligand>
</feature>
<evidence type="ECO:0000255" key="1">
    <source>
        <dbReference type="HAMAP-Rule" id="MF_00605"/>
    </source>
</evidence>
<proteinExistence type="inferred from homology"/>
<keyword id="KW-0963">Cytoplasm</keyword>
<keyword id="KW-0489">Methyltransferase</keyword>
<keyword id="KW-0949">S-adenosyl-L-methionine</keyword>
<keyword id="KW-0808">Transferase</keyword>
<keyword id="KW-0819">tRNA processing</keyword>